<accession>Q63CN1</accession>
<feature type="chain" id="PRO_0000237536" description="L-lactate dehydrogenase 1">
    <location>
        <begin position="1"/>
        <end position="314"/>
    </location>
</feature>
<feature type="active site" description="Proton acceptor" evidence="1">
    <location>
        <position position="178"/>
    </location>
</feature>
<feature type="binding site" evidence="1">
    <location>
        <position position="16"/>
    </location>
    <ligand>
        <name>NAD(+)</name>
        <dbReference type="ChEBI" id="CHEBI:57540"/>
    </ligand>
</feature>
<feature type="binding site" evidence="1">
    <location>
        <position position="37"/>
    </location>
    <ligand>
        <name>NAD(+)</name>
        <dbReference type="ChEBI" id="CHEBI:57540"/>
    </ligand>
</feature>
<feature type="binding site" evidence="1">
    <location>
        <position position="42"/>
    </location>
    <ligand>
        <name>NAD(+)</name>
        <dbReference type="ChEBI" id="CHEBI:57540"/>
    </ligand>
</feature>
<feature type="binding site" evidence="1">
    <location>
        <position position="68"/>
    </location>
    <ligand>
        <name>NAD(+)</name>
        <dbReference type="ChEBI" id="CHEBI:57540"/>
    </ligand>
</feature>
<feature type="binding site" evidence="1">
    <location>
        <begin position="82"/>
        <end position="83"/>
    </location>
    <ligand>
        <name>NAD(+)</name>
        <dbReference type="ChEBI" id="CHEBI:57540"/>
    </ligand>
</feature>
<feature type="binding site" evidence="1">
    <location>
        <position position="85"/>
    </location>
    <ligand>
        <name>substrate</name>
    </ligand>
</feature>
<feature type="binding site" evidence="1">
    <location>
        <position position="91"/>
    </location>
    <ligand>
        <name>substrate</name>
    </ligand>
</feature>
<feature type="binding site" evidence="1">
    <location>
        <begin position="121"/>
        <end position="123"/>
    </location>
    <ligand>
        <name>NAD(+)</name>
        <dbReference type="ChEBI" id="CHEBI:57540"/>
    </ligand>
</feature>
<feature type="binding site" evidence="1">
    <location>
        <begin position="123"/>
        <end position="126"/>
    </location>
    <ligand>
        <name>substrate</name>
    </ligand>
</feature>
<feature type="binding site" evidence="1">
    <location>
        <position position="146"/>
    </location>
    <ligand>
        <name>NAD(+)</name>
        <dbReference type="ChEBI" id="CHEBI:57540"/>
    </ligand>
</feature>
<feature type="binding site" evidence="1">
    <location>
        <begin position="151"/>
        <end position="154"/>
    </location>
    <ligand>
        <name>substrate</name>
    </ligand>
</feature>
<feature type="binding site" evidence="1">
    <location>
        <position position="156"/>
    </location>
    <ligand>
        <name>beta-D-fructose 1,6-bisphosphate</name>
        <dbReference type="ChEBI" id="CHEBI:32966"/>
        <note>allosteric activator</note>
    </ligand>
</feature>
<feature type="binding site" evidence="1">
    <location>
        <position position="171"/>
    </location>
    <ligand>
        <name>beta-D-fructose 1,6-bisphosphate</name>
        <dbReference type="ChEBI" id="CHEBI:32966"/>
        <note>allosteric activator</note>
    </ligand>
</feature>
<feature type="binding site" evidence="1">
    <location>
        <position position="232"/>
    </location>
    <ligand>
        <name>substrate</name>
    </ligand>
</feature>
<feature type="modified residue" description="Phosphotyrosine" evidence="1">
    <location>
        <position position="223"/>
    </location>
</feature>
<proteinExistence type="inferred from homology"/>
<gene>
    <name evidence="1" type="primary">ldh1</name>
    <name type="ordered locus">BCE33L1741</name>
</gene>
<keyword id="KW-0021">Allosteric enzyme</keyword>
<keyword id="KW-0963">Cytoplasm</keyword>
<keyword id="KW-0520">NAD</keyword>
<keyword id="KW-0560">Oxidoreductase</keyword>
<keyword id="KW-0597">Phosphoprotein</keyword>
<organism>
    <name type="scientific">Bacillus cereus (strain ZK / E33L)</name>
    <dbReference type="NCBI Taxonomy" id="288681"/>
    <lineage>
        <taxon>Bacteria</taxon>
        <taxon>Bacillati</taxon>
        <taxon>Bacillota</taxon>
        <taxon>Bacilli</taxon>
        <taxon>Bacillales</taxon>
        <taxon>Bacillaceae</taxon>
        <taxon>Bacillus</taxon>
        <taxon>Bacillus cereus group</taxon>
    </lineage>
</organism>
<evidence type="ECO:0000255" key="1">
    <source>
        <dbReference type="HAMAP-Rule" id="MF_00488"/>
    </source>
</evidence>
<reference key="1">
    <citation type="journal article" date="2006" name="J. Bacteriol.">
        <title>Pathogenomic sequence analysis of Bacillus cereus and Bacillus thuringiensis isolates closely related to Bacillus anthracis.</title>
        <authorList>
            <person name="Han C.S."/>
            <person name="Xie G."/>
            <person name="Challacombe J.F."/>
            <person name="Altherr M.R."/>
            <person name="Bhotika S.S."/>
            <person name="Bruce D."/>
            <person name="Campbell C.S."/>
            <person name="Campbell M.L."/>
            <person name="Chen J."/>
            <person name="Chertkov O."/>
            <person name="Cleland C."/>
            <person name="Dimitrijevic M."/>
            <person name="Doggett N.A."/>
            <person name="Fawcett J.J."/>
            <person name="Glavina T."/>
            <person name="Goodwin L.A."/>
            <person name="Hill K.K."/>
            <person name="Hitchcock P."/>
            <person name="Jackson P.J."/>
            <person name="Keim P."/>
            <person name="Kewalramani A.R."/>
            <person name="Longmire J."/>
            <person name="Lucas S."/>
            <person name="Malfatti S."/>
            <person name="McMurry K."/>
            <person name="Meincke L.J."/>
            <person name="Misra M."/>
            <person name="Moseman B.L."/>
            <person name="Mundt M."/>
            <person name="Munk A.C."/>
            <person name="Okinaka R.T."/>
            <person name="Parson-Quintana B."/>
            <person name="Reilly L.P."/>
            <person name="Richardson P."/>
            <person name="Robinson D.L."/>
            <person name="Rubin E."/>
            <person name="Saunders E."/>
            <person name="Tapia R."/>
            <person name="Tesmer J.G."/>
            <person name="Thayer N."/>
            <person name="Thompson L.S."/>
            <person name="Tice H."/>
            <person name="Ticknor L.O."/>
            <person name="Wills P.L."/>
            <person name="Brettin T.S."/>
            <person name="Gilna P."/>
        </authorList>
    </citation>
    <scope>NUCLEOTIDE SEQUENCE [LARGE SCALE GENOMIC DNA]</scope>
    <source>
        <strain>ZK / E33L</strain>
    </source>
</reference>
<comment type="function">
    <text evidence="1">Catalyzes the conversion of lactate to pyruvate.</text>
</comment>
<comment type="catalytic activity">
    <reaction evidence="1">
        <text>(S)-lactate + NAD(+) = pyruvate + NADH + H(+)</text>
        <dbReference type="Rhea" id="RHEA:23444"/>
        <dbReference type="ChEBI" id="CHEBI:15361"/>
        <dbReference type="ChEBI" id="CHEBI:15378"/>
        <dbReference type="ChEBI" id="CHEBI:16651"/>
        <dbReference type="ChEBI" id="CHEBI:57540"/>
        <dbReference type="ChEBI" id="CHEBI:57945"/>
        <dbReference type="EC" id="1.1.1.27"/>
    </reaction>
</comment>
<comment type="activity regulation">
    <text evidence="1">Allosterically activated by fructose 1,6-bisphosphate (FBP).</text>
</comment>
<comment type="pathway">
    <text evidence="1">Fermentation; pyruvate fermentation to lactate; (S)-lactate from pyruvate: step 1/1.</text>
</comment>
<comment type="subunit">
    <text evidence="1">Homotetramer.</text>
</comment>
<comment type="subcellular location">
    <subcellularLocation>
        <location evidence="1">Cytoplasm</location>
    </subcellularLocation>
</comment>
<comment type="similarity">
    <text evidence="1">Belongs to the LDH/MDH superfamily. LDH family.</text>
</comment>
<name>LDH1_BACCZ</name>
<protein>
    <recommendedName>
        <fullName evidence="1">L-lactate dehydrogenase 1</fullName>
        <shortName evidence="1">L-LDH 1</shortName>
        <ecNumber evidence="1">1.1.1.27</ecNumber>
    </recommendedName>
</protein>
<dbReference type="EC" id="1.1.1.27" evidence="1"/>
<dbReference type="EMBL" id="CP000001">
    <property type="protein sequence ID" value="AAU18512.1"/>
    <property type="molecule type" value="Genomic_DNA"/>
</dbReference>
<dbReference type="RefSeq" id="WP_000715326.1">
    <property type="nucleotide sequence ID" value="NZ_CP009968.1"/>
</dbReference>
<dbReference type="SMR" id="Q63CN1"/>
<dbReference type="KEGG" id="bcz:BCE33L1741"/>
<dbReference type="PATRIC" id="fig|288681.22.peg.3795"/>
<dbReference type="UniPathway" id="UPA00554">
    <property type="reaction ID" value="UER00611"/>
</dbReference>
<dbReference type="Proteomes" id="UP000002612">
    <property type="component" value="Chromosome"/>
</dbReference>
<dbReference type="GO" id="GO:0005737">
    <property type="term" value="C:cytoplasm"/>
    <property type="evidence" value="ECO:0007669"/>
    <property type="project" value="UniProtKB-SubCell"/>
</dbReference>
<dbReference type="GO" id="GO:0004459">
    <property type="term" value="F:L-lactate dehydrogenase activity"/>
    <property type="evidence" value="ECO:0007669"/>
    <property type="project" value="UniProtKB-UniRule"/>
</dbReference>
<dbReference type="GO" id="GO:0006096">
    <property type="term" value="P:glycolytic process"/>
    <property type="evidence" value="ECO:0007669"/>
    <property type="project" value="UniProtKB-UniRule"/>
</dbReference>
<dbReference type="GO" id="GO:0006089">
    <property type="term" value="P:lactate metabolic process"/>
    <property type="evidence" value="ECO:0007669"/>
    <property type="project" value="TreeGrafter"/>
</dbReference>
<dbReference type="CDD" id="cd05291">
    <property type="entry name" value="HicDH_like"/>
    <property type="match status" value="1"/>
</dbReference>
<dbReference type="FunFam" id="3.90.110.10:FF:000005">
    <property type="entry name" value="L-lactate dehydrogenase"/>
    <property type="match status" value="1"/>
</dbReference>
<dbReference type="FunFam" id="3.40.50.720:FF:000018">
    <property type="entry name" value="Malate dehydrogenase"/>
    <property type="match status" value="1"/>
</dbReference>
<dbReference type="Gene3D" id="3.90.110.10">
    <property type="entry name" value="Lactate dehydrogenase/glycoside hydrolase, family 4, C-terminal"/>
    <property type="match status" value="1"/>
</dbReference>
<dbReference type="Gene3D" id="3.40.50.720">
    <property type="entry name" value="NAD(P)-binding Rossmann-like Domain"/>
    <property type="match status" value="1"/>
</dbReference>
<dbReference type="HAMAP" id="MF_00488">
    <property type="entry name" value="Lactate_dehydrog"/>
    <property type="match status" value="1"/>
</dbReference>
<dbReference type="InterPro" id="IPR001557">
    <property type="entry name" value="L-lactate/malate_DH"/>
</dbReference>
<dbReference type="InterPro" id="IPR011304">
    <property type="entry name" value="L-lactate_DH"/>
</dbReference>
<dbReference type="InterPro" id="IPR018177">
    <property type="entry name" value="L-lactate_DH_AS"/>
</dbReference>
<dbReference type="InterPro" id="IPR022383">
    <property type="entry name" value="Lactate/malate_DH_C"/>
</dbReference>
<dbReference type="InterPro" id="IPR001236">
    <property type="entry name" value="Lactate/malate_DH_N"/>
</dbReference>
<dbReference type="InterPro" id="IPR015955">
    <property type="entry name" value="Lactate_DH/Glyco_Ohase_4_C"/>
</dbReference>
<dbReference type="InterPro" id="IPR036291">
    <property type="entry name" value="NAD(P)-bd_dom_sf"/>
</dbReference>
<dbReference type="NCBIfam" id="TIGR01771">
    <property type="entry name" value="L-LDH-NAD"/>
    <property type="match status" value="1"/>
</dbReference>
<dbReference type="NCBIfam" id="NF000824">
    <property type="entry name" value="PRK00066.1"/>
    <property type="match status" value="1"/>
</dbReference>
<dbReference type="NCBIfam" id="NF004863">
    <property type="entry name" value="PRK06223.1"/>
    <property type="match status" value="1"/>
</dbReference>
<dbReference type="PANTHER" id="PTHR43128">
    <property type="entry name" value="L-2-HYDROXYCARBOXYLATE DEHYDROGENASE (NAD(P)(+))"/>
    <property type="match status" value="1"/>
</dbReference>
<dbReference type="PANTHER" id="PTHR43128:SF16">
    <property type="entry name" value="L-LACTATE DEHYDROGENASE"/>
    <property type="match status" value="1"/>
</dbReference>
<dbReference type="Pfam" id="PF02866">
    <property type="entry name" value="Ldh_1_C"/>
    <property type="match status" value="1"/>
</dbReference>
<dbReference type="Pfam" id="PF00056">
    <property type="entry name" value="Ldh_1_N"/>
    <property type="match status" value="1"/>
</dbReference>
<dbReference type="PIRSF" id="PIRSF000102">
    <property type="entry name" value="Lac_mal_DH"/>
    <property type="match status" value="1"/>
</dbReference>
<dbReference type="PRINTS" id="PR00086">
    <property type="entry name" value="LLDHDRGNASE"/>
</dbReference>
<dbReference type="SUPFAM" id="SSF56327">
    <property type="entry name" value="LDH C-terminal domain-like"/>
    <property type="match status" value="1"/>
</dbReference>
<dbReference type="SUPFAM" id="SSF51735">
    <property type="entry name" value="NAD(P)-binding Rossmann-fold domains"/>
    <property type="match status" value="1"/>
</dbReference>
<dbReference type="PROSITE" id="PS00064">
    <property type="entry name" value="L_LDH"/>
    <property type="match status" value="1"/>
</dbReference>
<sequence>MKKGINRVVLVGTGAVGCSYAYCMINQAVAEEFVLVDVNEAKAEGEAMDLSHAVPFAPAPTRVWKGSYEDCKDADLVVITAGLPQKPGETRLDLVEKNAKIFKQIVRSIMDSGFDGIFLIATNPVDILTYVTWKESGLPKERVIGSGTTLDSARFRYMLGEYFNIGPHNIHAYIIGEHGDTELPVWSHVSVGIQKLQTLLEKDNTYNQEDLDKIFINVRDAAYHIIERKGATYYGIGMSLLRVTKAILNDENSVLTVSAYLEGQYGQKDVYIGVPAVLNRGGVREILEVELSEDEELKFDHSVQVLKETMAPVL</sequence>